<organism>
    <name type="scientific">Conus tessulatus</name>
    <name type="common">Tessellate cone</name>
    <dbReference type="NCBI Taxonomy" id="101317"/>
    <lineage>
        <taxon>Eukaryota</taxon>
        <taxon>Metazoa</taxon>
        <taxon>Spiralia</taxon>
        <taxon>Lophotrochozoa</taxon>
        <taxon>Mollusca</taxon>
        <taxon>Gastropoda</taxon>
        <taxon>Caenogastropoda</taxon>
        <taxon>Neogastropoda</taxon>
        <taxon>Conoidea</taxon>
        <taxon>Conidae</taxon>
        <taxon>Conus</taxon>
        <taxon>Tesselliconus</taxon>
    </lineage>
</organism>
<reference key="1">
    <citation type="journal article" date="2015" name="Proc. Natl. Acad. Sci. U.S.A.">
        <title>Insights into the origins of fish hunting in venomous cone snails from studies of Conus tessulatus.</title>
        <authorList>
            <person name="Aman J.W."/>
            <person name="Imperial J.S."/>
            <person name="Ueberheide B."/>
            <person name="Zhang M.M."/>
            <person name="Aguilar M."/>
            <person name="Taylor D."/>
            <person name="Watkins M."/>
            <person name="Yoshikami D."/>
            <person name="Showers-Corneli P."/>
            <person name="Safavi-Hemami H."/>
            <person name="Biggs J."/>
            <person name="Teichert R.W."/>
            <person name="Olivera B.M."/>
        </authorList>
    </citation>
    <scope>NUCLEOTIDE SEQUENCE [MRNA]</scope>
    <scope>PROTEIN SEQUENCE</scope>
    <scope>IDENTIFICATION BY MASS SPECTROMETRY</scope>
    <scope>SUBCELLULAR LOCATION</scope>
    <source>
        <tissue>Venom</tissue>
    </source>
</reference>
<comment type="function">
    <text evidence="2">Delta-conotoxins bind to site 6 of voltage-gated sodium channels (Nav) and inhibit the inactivation process. This toxin inhibits tetrodotoxin(TTX)-sensitive sodium channels. A test on mouse Nav1.6/SCN8A confirms this sensitivity.</text>
</comment>
<comment type="subcellular location">
    <subcellularLocation>
        <location evidence="2">Secreted</location>
    </subcellularLocation>
</comment>
<comment type="tissue specificity">
    <text evidence="5">Expressed by the venom duct.</text>
</comment>
<comment type="domain">
    <text evidence="4">The cysteine framework is VI/VII (C-C-CC-C-C).</text>
</comment>
<comment type="domain">
    <text evidence="1">The presence of a 'disulfide through disulfide knot' structurally defines this protein as a knottin.</text>
</comment>
<comment type="similarity">
    <text evidence="4">Belongs to the conotoxin O1 superfamily.</text>
</comment>
<sequence>CAAFGSFCGLPGLVDCCSGRCFIVCLL</sequence>
<evidence type="ECO:0000250" key="1">
    <source>
        <dbReference type="UniProtKB" id="P60513"/>
    </source>
</evidence>
<evidence type="ECO:0000269" key="2">
    <source>
    </source>
</evidence>
<evidence type="ECO:0000303" key="3">
    <source>
    </source>
</evidence>
<evidence type="ECO:0000305" key="4"/>
<evidence type="ECO:0000305" key="5">
    <source>
    </source>
</evidence>
<name>O16A_CONTS</name>
<keyword id="KW-0903">Direct protein sequencing</keyword>
<keyword id="KW-1015">Disulfide bond</keyword>
<keyword id="KW-0872">Ion channel impairing toxin</keyword>
<keyword id="KW-0960">Knottin</keyword>
<keyword id="KW-0528">Neurotoxin</keyword>
<keyword id="KW-0964">Secreted</keyword>
<keyword id="KW-0800">Toxin</keyword>
<keyword id="KW-0738">Voltage-gated sodium channel impairing toxin</keyword>
<dbReference type="GO" id="GO:0005576">
    <property type="term" value="C:extracellular region"/>
    <property type="evidence" value="ECO:0007669"/>
    <property type="project" value="UniProtKB-SubCell"/>
</dbReference>
<dbReference type="GO" id="GO:0017080">
    <property type="term" value="F:sodium channel regulator activity"/>
    <property type="evidence" value="ECO:0007669"/>
    <property type="project" value="UniProtKB-KW"/>
</dbReference>
<dbReference type="GO" id="GO:0090729">
    <property type="term" value="F:toxin activity"/>
    <property type="evidence" value="ECO:0007669"/>
    <property type="project" value="UniProtKB-KW"/>
</dbReference>
<accession>P0DL66</accession>
<protein>
    <recommendedName>
        <fullName evidence="3">Delta-conotoxin TsVIA</fullName>
    </recommendedName>
</protein>
<feature type="peptide" id="PRO_0000439826" description="Delta-conotoxin TsVIA" evidence="2">
    <location>
        <begin position="1"/>
        <end position="27"/>
    </location>
</feature>
<feature type="disulfide bond" evidence="1">
    <location>
        <begin position="1"/>
        <end position="17"/>
    </location>
</feature>
<feature type="disulfide bond" evidence="1">
    <location>
        <begin position="8"/>
        <end position="21"/>
    </location>
</feature>
<feature type="disulfide bond" evidence="1">
    <location>
        <begin position="16"/>
        <end position="25"/>
    </location>
</feature>
<proteinExistence type="evidence at protein level"/>